<sequence length="220" mass="25976">MKIDILDKGFVELVDVMGNDLSAVRAARVSFDMGLKDEERDRHLIEYLMKHGHETPFEHIVFTFHVKAPIFVARQWFRHRIASYNELSGRYSKLSYEFYIPSPERLEGYKTTIPPEQVTEKISEIVDKAYRTYLELIESGVPREVARIVLPLNLYTRFFWTVNARSLMNFLNLRADSHAQWEIQQYALAIARIFKEKCPWTFEAFLKYAYKGDILKEVQV</sequence>
<organism>
    <name type="scientific">Thermotoga petrophila (strain ATCC BAA-488 / DSM 13995 / JCM 10881 / RKU-1)</name>
    <dbReference type="NCBI Taxonomy" id="390874"/>
    <lineage>
        <taxon>Bacteria</taxon>
        <taxon>Thermotogati</taxon>
        <taxon>Thermotogota</taxon>
        <taxon>Thermotogae</taxon>
        <taxon>Thermotogales</taxon>
        <taxon>Thermotogaceae</taxon>
        <taxon>Thermotoga</taxon>
    </lineage>
</organism>
<reference key="1">
    <citation type="submission" date="2007-05" db="EMBL/GenBank/DDBJ databases">
        <title>Complete sequence of Thermotoga petrophila RKU-1.</title>
        <authorList>
            <consortium name="US DOE Joint Genome Institute"/>
            <person name="Copeland A."/>
            <person name="Lucas S."/>
            <person name="Lapidus A."/>
            <person name="Barry K."/>
            <person name="Glavina del Rio T."/>
            <person name="Dalin E."/>
            <person name="Tice H."/>
            <person name="Pitluck S."/>
            <person name="Sims D."/>
            <person name="Brettin T."/>
            <person name="Bruce D."/>
            <person name="Detter J.C."/>
            <person name="Han C."/>
            <person name="Tapia R."/>
            <person name="Schmutz J."/>
            <person name="Larimer F."/>
            <person name="Land M."/>
            <person name="Hauser L."/>
            <person name="Kyrpides N."/>
            <person name="Mikhailova N."/>
            <person name="Nelson K."/>
            <person name="Gogarten J.P."/>
            <person name="Noll K."/>
            <person name="Richardson P."/>
        </authorList>
    </citation>
    <scope>NUCLEOTIDE SEQUENCE [LARGE SCALE GENOMIC DNA]</scope>
    <source>
        <strain>ATCC BAA-488 / DSM 13995 / JCM 10881 / RKU-1</strain>
    </source>
</reference>
<proteinExistence type="inferred from homology"/>
<evidence type="ECO:0000255" key="1">
    <source>
        <dbReference type="HAMAP-Rule" id="MF_01408"/>
    </source>
</evidence>
<evidence type="ECO:0000255" key="2">
    <source>
        <dbReference type="PROSITE-ProRule" id="PRU00661"/>
    </source>
</evidence>
<name>THYX_THEP1</name>
<protein>
    <recommendedName>
        <fullName evidence="1">Flavin-dependent thymidylate synthase</fullName>
        <shortName evidence="1">FDTS</shortName>
        <ecNumber evidence="1">2.1.1.148</ecNumber>
    </recommendedName>
    <alternativeName>
        <fullName evidence="1">FAD-dependent thymidylate synthase</fullName>
    </alternativeName>
    <alternativeName>
        <fullName evidence="1">Thymidylate synthase ThyX</fullName>
        <shortName evidence="1">TS</shortName>
        <shortName evidence="1">TSase</shortName>
    </alternativeName>
</protein>
<dbReference type="EC" id="2.1.1.148" evidence="1"/>
<dbReference type="EMBL" id="CP000702">
    <property type="protein sequence ID" value="ABQ46495.1"/>
    <property type="molecule type" value="Genomic_DNA"/>
</dbReference>
<dbReference type="RefSeq" id="WP_011943111.1">
    <property type="nucleotide sequence ID" value="NC_009486.1"/>
</dbReference>
<dbReference type="SMR" id="A5IJX2"/>
<dbReference type="STRING" id="390874.Tpet_0471"/>
<dbReference type="KEGG" id="tpt:Tpet_0471"/>
<dbReference type="eggNOG" id="COG1351">
    <property type="taxonomic scope" value="Bacteria"/>
</dbReference>
<dbReference type="HOGENOM" id="CLU_067790_0_0_0"/>
<dbReference type="UniPathway" id="UPA00575"/>
<dbReference type="Proteomes" id="UP000006558">
    <property type="component" value="Chromosome"/>
</dbReference>
<dbReference type="GO" id="GO:0050660">
    <property type="term" value="F:flavin adenine dinucleotide binding"/>
    <property type="evidence" value="ECO:0007669"/>
    <property type="project" value="InterPro"/>
</dbReference>
<dbReference type="GO" id="GO:0070402">
    <property type="term" value="F:NADPH binding"/>
    <property type="evidence" value="ECO:0007669"/>
    <property type="project" value="TreeGrafter"/>
</dbReference>
<dbReference type="GO" id="GO:0050797">
    <property type="term" value="F:thymidylate synthase (FAD) activity"/>
    <property type="evidence" value="ECO:0007669"/>
    <property type="project" value="UniProtKB-UniRule"/>
</dbReference>
<dbReference type="GO" id="GO:0004799">
    <property type="term" value="F:thymidylate synthase activity"/>
    <property type="evidence" value="ECO:0007669"/>
    <property type="project" value="TreeGrafter"/>
</dbReference>
<dbReference type="GO" id="GO:0006231">
    <property type="term" value="P:dTMP biosynthetic process"/>
    <property type="evidence" value="ECO:0007669"/>
    <property type="project" value="UniProtKB-UniRule"/>
</dbReference>
<dbReference type="GO" id="GO:0006235">
    <property type="term" value="P:dTTP biosynthetic process"/>
    <property type="evidence" value="ECO:0007669"/>
    <property type="project" value="UniProtKB-UniRule"/>
</dbReference>
<dbReference type="GO" id="GO:0032259">
    <property type="term" value="P:methylation"/>
    <property type="evidence" value="ECO:0007669"/>
    <property type="project" value="UniProtKB-KW"/>
</dbReference>
<dbReference type="CDD" id="cd20175">
    <property type="entry name" value="ThyX"/>
    <property type="match status" value="1"/>
</dbReference>
<dbReference type="FunFam" id="3.30.1360.170:FF:000008">
    <property type="entry name" value="Flavin-dependent thymidylate synthase"/>
    <property type="match status" value="1"/>
</dbReference>
<dbReference type="Gene3D" id="3.30.1360.170">
    <property type="match status" value="1"/>
</dbReference>
<dbReference type="HAMAP" id="MF_01408">
    <property type="entry name" value="ThyX"/>
    <property type="match status" value="1"/>
</dbReference>
<dbReference type="InterPro" id="IPR003669">
    <property type="entry name" value="Thymidylate_synthase_ThyX"/>
</dbReference>
<dbReference type="InterPro" id="IPR036098">
    <property type="entry name" value="Thymidylate_synthase_ThyX_sf"/>
</dbReference>
<dbReference type="NCBIfam" id="TIGR02170">
    <property type="entry name" value="thyX"/>
    <property type="match status" value="1"/>
</dbReference>
<dbReference type="PANTHER" id="PTHR34934">
    <property type="entry name" value="FLAVIN-DEPENDENT THYMIDYLATE SYNTHASE"/>
    <property type="match status" value="1"/>
</dbReference>
<dbReference type="PANTHER" id="PTHR34934:SF1">
    <property type="entry name" value="FLAVIN-DEPENDENT THYMIDYLATE SYNTHASE"/>
    <property type="match status" value="1"/>
</dbReference>
<dbReference type="Pfam" id="PF02511">
    <property type="entry name" value="Thy1"/>
    <property type="match status" value="1"/>
</dbReference>
<dbReference type="SUPFAM" id="SSF69796">
    <property type="entry name" value="Thymidylate synthase-complementing protein Thy1"/>
    <property type="match status" value="1"/>
</dbReference>
<dbReference type="PROSITE" id="PS51331">
    <property type="entry name" value="THYX"/>
    <property type="match status" value="1"/>
</dbReference>
<comment type="function">
    <text evidence="1">Catalyzes the reductive methylation of 2'-deoxyuridine-5'-monophosphate (dUMP) to 2'-deoxythymidine-5'-monophosphate (dTMP) while utilizing 5,10-methylenetetrahydrofolate (mTHF) as the methyl donor, and NADPH and FADH(2) as the reductant.</text>
</comment>
<comment type="catalytic activity">
    <reaction evidence="1">
        <text>dUMP + (6R)-5,10-methylene-5,6,7,8-tetrahydrofolate + NADPH + H(+) = dTMP + (6S)-5,6,7,8-tetrahydrofolate + NADP(+)</text>
        <dbReference type="Rhea" id="RHEA:29043"/>
        <dbReference type="ChEBI" id="CHEBI:15378"/>
        <dbReference type="ChEBI" id="CHEBI:15636"/>
        <dbReference type="ChEBI" id="CHEBI:57453"/>
        <dbReference type="ChEBI" id="CHEBI:57783"/>
        <dbReference type="ChEBI" id="CHEBI:58349"/>
        <dbReference type="ChEBI" id="CHEBI:63528"/>
        <dbReference type="ChEBI" id="CHEBI:246422"/>
        <dbReference type="EC" id="2.1.1.148"/>
    </reaction>
</comment>
<comment type="cofactor">
    <cofactor evidence="1">
        <name>FAD</name>
        <dbReference type="ChEBI" id="CHEBI:57692"/>
    </cofactor>
    <text evidence="1">Binds 4 FAD per tetramer. Each FAD binding site is formed by three monomers.</text>
</comment>
<comment type="pathway">
    <text evidence="1">Pyrimidine metabolism; dTTP biosynthesis.</text>
</comment>
<comment type="subunit">
    <text evidence="1">Homotetramer.</text>
</comment>
<comment type="similarity">
    <text evidence="1">Belongs to the thymidylate synthase ThyX family.</text>
</comment>
<accession>A5IJX2</accession>
<feature type="chain" id="PRO_1000184606" description="Flavin-dependent thymidylate synthase">
    <location>
        <begin position="1"/>
        <end position="220"/>
    </location>
</feature>
<feature type="domain" description="ThyX" evidence="2">
    <location>
        <begin position="1"/>
        <end position="208"/>
    </location>
</feature>
<feature type="short sequence motif" description="ThyX motif" evidence="1">
    <location>
        <begin position="78"/>
        <end position="88"/>
    </location>
</feature>
<feature type="active site" description="Involved in ionization of N3 of dUMP, leading to its activation" evidence="1">
    <location>
        <position position="174"/>
    </location>
</feature>
<feature type="binding site" evidence="1">
    <location>
        <position position="55"/>
    </location>
    <ligand>
        <name>FAD</name>
        <dbReference type="ChEBI" id="CHEBI:57692"/>
        <note>ligand shared between neighboring subunits</note>
    </ligand>
</feature>
<feature type="binding site" evidence="1">
    <location>
        <begin position="75"/>
        <end position="78"/>
    </location>
    <ligand>
        <name>dUMP</name>
        <dbReference type="ChEBI" id="CHEBI:246422"/>
        <note>ligand shared between dimeric partners</note>
    </ligand>
</feature>
<feature type="binding site" evidence="1">
    <location>
        <begin position="78"/>
        <end position="80"/>
    </location>
    <ligand>
        <name>FAD</name>
        <dbReference type="ChEBI" id="CHEBI:57692"/>
        <note>ligand shared between neighboring subunits</note>
    </ligand>
</feature>
<feature type="binding site" description="in other chain" evidence="1">
    <location>
        <begin position="86"/>
        <end position="90"/>
    </location>
    <ligand>
        <name>dUMP</name>
        <dbReference type="ChEBI" id="CHEBI:246422"/>
        <note>ligand shared between dimeric partners</note>
    </ligand>
</feature>
<feature type="binding site" evidence="1">
    <location>
        <position position="86"/>
    </location>
    <ligand>
        <name>FAD</name>
        <dbReference type="ChEBI" id="CHEBI:57692"/>
        <note>ligand shared between neighboring subunits</note>
    </ligand>
</feature>
<feature type="binding site" description="in other chain" evidence="1">
    <location>
        <position position="147"/>
    </location>
    <ligand>
        <name>dUMP</name>
        <dbReference type="ChEBI" id="CHEBI:246422"/>
        <note>ligand shared between dimeric partners</note>
    </ligand>
</feature>
<feature type="binding site" evidence="1">
    <location>
        <begin position="163"/>
        <end position="165"/>
    </location>
    <ligand>
        <name>FAD</name>
        <dbReference type="ChEBI" id="CHEBI:57692"/>
        <note>ligand shared between neighboring subunits</note>
    </ligand>
</feature>
<feature type="binding site" evidence="1">
    <location>
        <position position="169"/>
    </location>
    <ligand>
        <name>FAD</name>
        <dbReference type="ChEBI" id="CHEBI:57692"/>
        <note>ligand shared between neighboring subunits</note>
    </ligand>
</feature>
<feature type="binding site" evidence="1">
    <location>
        <position position="174"/>
    </location>
    <ligand>
        <name>dUMP</name>
        <dbReference type="ChEBI" id="CHEBI:246422"/>
        <note>ligand shared between dimeric partners</note>
    </ligand>
</feature>
<keyword id="KW-0274">FAD</keyword>
<keyword id="KW-0285">Flavoprotein</keyword>
<keyword id="KW-0489">Methyltransferase</keyword>
<keyword id="KW-0521">NADP</keyword>
<keyword id="KW-0545">Nucleotide biosynthesis</keyword>
<keyword id="KW-0808">Transferase</keyword>
<gene>
    <name evidence="1" type="primary">thyX</name>
    <name type="ordered locus">Tpet_0471</name>
</gene>